<evidence type="ECO:0000255" key="1">
    <source>
        <dbReference type="HAMAP-Rule" id="MF_01346"/>
    </source>
</evidence>
<evidence type="ECO:0000256" key="2">
    <source>
        <dbReference type="SAM" id="MobiDB-lite"/>
    </source>
</evidence>
<accession>A4T8K0</accession>
<name>ATPA_MYCGI</name>
<sequence length="548" mass="59087">MAELIISASDIEGAIEDYVSSFTADSEREEIGTVIDAGDGIAHVEGLPSVMTQELLEFPGGVLGVALNLDEHSVGAVILGEFEKIEEGQQVKRTGEVLSVPVGDAFLGRVINPLGQPIDGQGDIESDTRRALELQAPSVVQRQGVSEPLQTGIKAIDSQTPIGRGQRQLIIGDRKTGKTAVAVDTILNQRKAWETGDPKQQVRCVYVAIGQKGTTIASVKRALEEGGAMEYTTIVAAPASDAAGFKWLAPYTGSAIGQHWMYDGKHVLIVFDDLSKQADAYRAISLLLRRPPGREAFPGDVFYLHSRLLERCAKLSDELGGGSMTGLPIIETKANDISAFIPTNVISITDGQCFLESDLFNQGVRPAINVGVSVSRVGGAAQIKAMKEVAGSLRLELSQYRELESFAAFASDLDAASKAQLDRGARLVELLKQPQYTPYSVEDQVVAIFLGTKGHLDSVPVEDVSRFEQEVLEHVKASHDDILQEIRETKKLSESTEEKLTNVINDFKKGFSASDGSSVVVNEADAEAMDEADVEKESVKVRKPAPKK</sequence>
<reference key="1">
    <citation type="submission" date="2007-04" db="EMBL/GenBank/DDBJ databases">
        <title>Complete sequence of chromosome of Mycobacterium gilvum PYR-GCK.</title>
        <authorList>
            <consortium name="US DOE Joint Genome Institute"/>
            <person name="Copeland A."/>
            <person name="Lucas S."/>
            <person name="Lapidus A."/>
            <person name="Barry K."/>
            <person name="Detter J.C."/>
            <person name="Glavina del Rio T."/>
            <person name="Hammon N."/>
            <person name="Israni S."/>
            <person name="Dalin E."/>
            <person name="Tice H."/>
            <person name="Pitluck S."/>
            <person name="Chain P."/>
            <person name="Malfatti S."/>
            <person name="Shin M."/>
            <person name="Vergez L."/>
            <person name="Schmutz J."/>
            <person name="Larimer F."/>
            <person name="Land M."/>
            <person name="Hauser L."/>
            <person name="Kyrpides N."/>
            <person name="Mikhailova N."/>
            <person name="Miller C."/>
            <person name="Richardson P."/>
        </authorList>
    </citation>
    <scope>NUCLEOTIDE SEQUENCE [LARGE SCALE GENOMIC DNA]</scope>
    <source>
        <strain>PYR-GCK</strain>
    </source>
</reference>
<protein>
    <recommendedName>
        <fullName evidence="1">ATP synthase subunit alpha</fullName>
        <ecNumber evidence="1">7.1.2.2</ecNumber>
    </recommendedName>
    <alternativeName>
        <fullName evidence="1">ATP synthase F1 sector subunit alpha</fullName>
    </alternativeName>
    <alternativeName>
        <fullName evidence="1">F-ATPase subunit alpha</fullName>
    </alternativeName>
</protein>
<dbReference type="EC" id="7.1.2.2" evidence="1"/>
<dbReference type="EMBL" id="CP000656">
    <property type="protein sequence ID" value="ABP44794.1"/>
    <property type="molecule type" value="Genomic_DNA"/>
</dbReference>
<dbReference type="SMR" id="A4T8K0"/>
<dbReference type="STRING" id="350054.Mflv_2316"/>
<dbReference type="KEGG" id="mgi:Mflv_2316"/>
<dbReference type="eggNOG" id="COG0056">
    <property type="taxonomic scope" value="Bacteria"/>
</dbReference>
<dbReference type="HOGENOM" id="CLU_010091_2_1_11"/>
<dbReference type="OrthoDB" id="9803053at2"/>
<dbReference type="GO" id="GO:0005886">
    <property type="term" value="C:plasma membrane"/>
    <property type="evidence" value="ECO:0007669"/>
    <property type="project" value="UniProtKB-SubCell"/>
</dbReference>
<dbReference type="GO" id="GO:0045259">
    <property type="term" value="C:proton-transporting ATP synthase complex"/>
    <property type="evidence" value="ECO:0007669"/>
    <property type="project" value="UniProtKB-KW"/>
</dbReference>
<dbReference type="GO" id="GO:0043531">
    <property type="term" value="F:ADP binding"/>
    <property type="evidence" value="ECO:0007669"/>
    <property type="project" value="TreeGrafter"/>
</dbReference>
<dbReference type="GO" id="GO:0005524">
    <property type="term" value="F:ATP binding"/>
    <property type="evidence" value="ECO:0007669"/>
    <property type="project" value="UniProtKB-UniRule"/>
</dbReference>
<dbReference type="GO" id="GO:0046933">
    <property type="term" value="F:proton-transporting ATP synthase activity, rotational mechanism"/>
    <property type="evidence" value="ECO:0007669"/>
    <property type="project" value="UniProtKB-UniRule"/>
</dbReference>
<dbReference type="CDD" id="cd18113">
    <property type="entry name" value="ATP-synt_F1_alpha_C"/>
    <property type="match status" value="1"/>
</dbReference>
<dbReference type="CDD" id="cd18116">
    <property type="entry name" value="ATP-synt_F1_alpha_N"/>
    <property type="match status" value="1"/>
</dbReference>
<dbReference type="CDD" id="cd01132">
    <property type="entry name" value="F1-ATPase_alpha_CD"/>
    <property type="match status" value="1"/>
</dbReference>
<dbReference type="FunFam" id="1.20.150.20:FF:000001">
    <property type="entry name" value="ATP synthase subunit alpha"/>
    <property type="match status" value="1"/>
</dbReference>
<dbReference type="FunFam" id="3.40.50.300:FF:000002">
    <property type="entry name" value="ATP synthase subunit alpha"/>
    <property type="match status" value="1"/>
</dbReference>
<dbReference type="Gene3D" id="2.40.30.20">
    <property type="match status" value="1"/>
</dbReference>
<dbReference type="Gene3D" id="1.20.150.20">
    <property type="entry name" value="ATP synthase alpha/beta chain, C-terminal domain"/>
    <property type="match status" value="1"/>
</dbReference>
<dbReference type="Gene3D" id="3.40.50.300">
    <property type="entry name" value="P-loop containing nucleotide triphosphate hydrolases"/>
    <property type="match status" value="1"/>
</dbReference>
<dbReference type="HAMAP" id="MF_01346">
    <property type="entry name" value="ATP_synth_alpha_bact"/>
    <property type="match status" value="1"/>
</dbReference>
<dbReference type="InterPro" id="IPR023366">
    <property type="entry name" value="ATP_synth_asu-like_sf"/>
</dbReference>
<dbReference type="InterPro" id="IPR000793">
    <property type="entry name" value="ATP_synth_asu_C"/>
</dbReference>
<dbReference type="InterPro" id="IPR038376">
    <property type="entry name" value="ATP_synth_asu_C_sf"/>
</dbReference>
<dbReference type="InterPro" id="IPR033732">
    <property type="entry name" value="ATP_synth_F1_a_nt-bd_dom"/>
</dbReference>
<dbReference type="InterPro" id="IPR005294">
    <property type="entry name" value="ATP_synth_F1_asu"/>
</dbReference>
<dbReference type="InterPro" id="IPR020003">
    <property type="entry name" value="ATPase_a/bsu_AS"/>
</dbReference>
<dbReference type="InterPro" id="IPR004100">
    <property type="entry name" value="ATPase_F1/V1/A1_a/bsu_N"/>
</dbReference>
<dbReference type="InterPro" id="IPR036121">
    <property type="entry name" value="ATPase_F1/V1/A1_a/bsu_N_sf"/>
</dbReference>
<dbReference type="InterPro" id="IPR000194">
    <property type="entry name" value="ATPase_F1/V1/A1_a/bsu_nucl-bd"/>
</dbReference>
<dbReference type="InterPro" id="IPR027417">
    <property type="entry name" value="P-loop_NTPase"/>
</dbReference>
<dbReference type="NCBIfam" id="TIGR00962">
    <property type="entry name" value="atpA"/>
    <property type="match status" value="1"/>
</dbReference>
<dbReference type="NCBIfam" id="NF009884">
    <property type="entry name" value="PRK13343.1"/>
    <property type="match status" value="1"/>
</dbReference>
<dbReference type="PANTHER" id="PTHR48082">
    <property type="entry name" value="ATP SYNTHASE SUBUNIT ALPHA, MITOCHONDRIAL"/>
    <property type="match status" value="1"/>
</dbReference>
<dbReference type="PANTHER" id="PTHR48082:SF2">
    <property type="entry name" value="ATP SYNTHASE SUBUNIT ALPHA, MITOCHONDRIAL"/>
    <property type="match status" value="1"/>
</dbReference>
<dbReference type="Pfam" id="PF00006">
    <property type="entry name" value="ATP-synt_ab"/>
    <property type="match status" value="1"/>
</dbReference>
<dbReference type="Pfam" id="PF00306">
    <property type="entry name" value="ATP-synt_ab_C"/>
    <property type="match status" value="1"/>
</dbReference>
<dbReference type="Pfam" id="PF02874">
    <property type="entry name" value="ATP-synt_ab_N"/>
    <property type="match status" value="1"/>
</dbReference>
<dbReference type="PIRSF" id="PIRSF039088">
    <property type="entry name" value="F_ATPase_subunit_alpha"/>
    <property type="match status" value="1"/>
</dbReference>
<dbReference type="SUPFAM" id="SSF47917">
    <property type="entry name" value="C-terminal domain of alpha and beta subunits of F1 ATP synthase"/>
    <property type="match status" value="1"/>
</dbReference>
<dbReference type="SUPFAM" id="SSF50615">
    <property type="entry name" value="N-terminal domain of alpha and beta subunits of F1 ATP synthase"/>
    <property type="match status" value="1"/>
</dbReference>
<dbReference type="SUPFAM" id="SSF52540">
    <property type="entry name" value="P-loop containing nucleoside triphosphate hydrolases"/>
    <property type="match status" value="1"/>
</dbReference>
<dbReference type="PROSITE" id="PS00152">
    <property type="entry name" value="ATPASE_ALPHA_BETA"/>
    <property type="match status" value="1"/>
</dbReference>
<gene>
    <name evidence="1" type="primary">atpA</name>
    <name type="ordered locus">Mflv_2316</name>
</gene>
<proteinExistence type="inferred from homology"/>
<keyword id="KW-0066">ATP synthesis</keyword>
<keyword id="KW-0067">ATP-binding</keyword>
<keyword id="KW-1003">Cell membrane</keyword>
<keyword id="KW-0139">CF(1)</keyword>
<keyword id="KW-0375">Hydrogen ion transport</keyword>
<keyword id="KW-0406">Ion transport</keyword>
<keyword id="KW-0472">Membrane</keyword>
<keyword id="KW-0547">Nucleotide-binding</keyword>
<keyword id="KW-1278">Translocase</keyword>
<keyword id="KW-0813">Transport</keyword>
<feature type="chain" id="PRO_1000086882" description="ATP synthase subunit alpha">
    <location>
        <begin position="1"/>
        <end position="548"/>
    </location>
</feature>
<feature type="region of interest" description="Disordered" evidence="2">
    <location>
        <begin position="526"/>
        <end position="548"/>
    </location>
</feature>
<feature type="binding site" evidence="1">
    <location>
        <begin position="172"/>
        <end position="179"/>
    </location>
    <ligand>
        <name>ATP</name>
        <dbReference type="ChEBI" id="CHEBI:30616"/>
    </ligand>
</feature>
<feature type="site" description="Required for activity" evidence="1">
    <location>
        <position position="373"/>
    </location>
</feature>
<comment type="function">
    <text evidence="1">Produces ATP from ADP in the presence of a proton gradient across the membrane. The alpha chain is a regulatory subunit.</text>
</comment>
<comment type="catalytic activity">
    <reaction evidence="1">
        <text>ATP + H2O + 4 H(+)(in) = ADP + phosphate + 5 H(+)(out)</text>
        <dbReference type="Rhea" id="RHEA:57720"/>
        <dbReference type="ChEBI" id="CHEBI:15377"/>
        <dbReference type="ChEBI" id="CHEBI:15378"/>
        <dbReference type="ChEBI" id="CHEBI:30616"/>
        <dbReference type="ChEBI" id="CHEBI:43474"/>
        <dbReference type="ChEBI" id="CHEBI:456216"/>
        <dbReference type="EC" id="7.1.2.2"/>
    </reaction>
</comment>
<comment type="subunit">
    <text evidence="1">F-type ATPases have 2 components, CF(1) - the catalytic core - and CF(0) - the membrane proton channel. CF(1) has five subunits: alpha(3), beta(3), gamma(1), delta(1), epsilon(1). CF(0) has three main subunits: a(1), b(2) and c(9-12). The alpha and beta chains form an alternating ring which encloses part of the gamma chain. CF(1) is attached to CF(0) by a central stalk formed by the gamma and epsilon chains, while a peripheral stalk is formed by the delta and b chains.</text>
</comment>
<comment type="subcellular location">
    <subcellularLocation>
        <location evidence="1">Cell membrane</location>
        <topology evidence="1">Peripheral membrane protein</topology>
    </subcellularLocation>
</comment>
<comment type="similarity">
    <text evidence="1">Belongs to the ATPase alpha/beta chains family.</text>
</comment>
<organism>
    <name type="scientific">Mycolicibacterium gilvum (strain PYR-GCK)</name>
    <name type="common">Mycobacterium gilvum (strain PYR-GCK)</name>
    <dbReference type="NCBI Taxonomy" id="350054"/>
    <lineage>
        <taxon>Bacteria</taxon>
        <taxon>Bacillati</taxon>
        <taxon>Actinomycetota</taxon>
        <taxon>Actinomycetes</taxon>
        <taxon>Mycobacteriales</taxon>
        <taxon>Mycobacteriaceae</taxon>
        <taxon>Mycolicibacterium</taxon>
    </lineage>
</organism>